<feature type="chain" id="PRO_0000095458" description="Glutamate racemase">
    <location>
        <begin position="1"/>
        <end position="277"/>
    </location>
</feature>
<feature type="active site" description="Proton donor/acceptor" evidence="1">
    <location>
        <position position="89"/>
    </location>
</feature>
<feature type="active site" description="Proton donor/acceptor" evidence="1">
    <location>
        <position position="204"/>
    </location>
</feature>
<feature type="binding site" evidence="1">
    <location>
        <begin position="25"/>
        <end position="26"/>
    </location>
    <ligand>
        <name>substrate</name>
    </ligand>
</feature>
<feature type="binding site" evidence="1">
    <location>
        <begin position="57"/>
        <end position="58"/>
    </location>
    <ligand>
        <name>substrate</name>
    </ligand>
</feature>
<feature type="binding site" evidence="1">
    <location>
        <begin position="90"/>
        <end position="91"/>
    </location>
    <ligand>
        <name>substrate</name>
    </ligand>
</feature>
<feature type="binding site" evidence="1">
    <location>
        <begin position="205"/>
        <end position="206"/>
    </location>
    <ligand>
        <name>substrate</name>
    </ligand>
</feature>
<gene>
    <name evidence="1" type="primary">murI</name>
    <name type="ordered locus">BR1195</name>
    <name type="ordered locus">BS1330_I1191</name>
</gene>
<reference key="1">
    <citation type="journal article" date="2002" name="Proc. Natl. Acad. Sci. U.S.A.">
        <title>The Brucella suis genome reveals fundamental similarities between animal and plant pathogens and symbionts.</title>
        <authorList>
            <person name="Paulsen I.T."/>
            <person name="Seshadri R."/>
            <person name="Nelson K.E."/>
            <person name="Eisen J.A."/>
            <person name="Heidelberg J.F."/>
            <person name="Read T.D."/>
            <person name="Dodson R.J."/>
            <person name="Umayam L.A."/>
            <person name="Brinkac L.M."/>
            <person name="Beanan M.J."/>
            <person name="Daugherty S.C."/>
            <person name="DeBoy R.T."/>
            <person name="Durkin A.S."/>
            <person name="Kolonay J.F."/>
            <person name="Madupu R."/>
            <person name="Nelson W.C."/>
            <person name="Ayodeji B."/>
            <person name="Kraul M."/>
            <person name="Shetty J."/>
            <person name="Malek J.A."/>
            <person name="Van Aken S.E."/>
            <person name="Riedmuller S."/>
            <person name="Tettelin H."/>
            <person name="Gill S.R."/>
            <person name="White O."/>
            <person name="Salzberg S.L."/>
            <person name="Hoover D.L."/>
            <person name="Lindler L.E."/>
            <person name="Halling S.M."/>
            <person name="Boyle S.M."/>
            <person name="Fraser C.M."/>
        </authorList>
    </citation>
    <scope>NUCLEOTIDE SEQUENCE [LARGE SCALE GENOMIC DNA]</scope>
    <source>
        <strain>1330</strain>
    </source>
</reference>
<reference key="2">
    <citation type="journal article" date="2011" name="J. Bacteriol.">
        <title>Revised genome sequence of Brucella suis 1330.</title>
        <authorList>
            <person name="Tae H."/>
            <person name="Shallom S."/>
            <person name="Settlage R."/>
            <person name="Preston D."/>
            <person name="Adams L.G."/>
            <person name="Garner H.R."/>
        </authorList>
    </citation>
    <scope>NUCLEOTIDE SEQUENCE [LARGE SCALE GENOMIC DNA]</scope>
    <source>
        <strain>1330</strain>
    </source>
</reference>
<keyword id="KW-0133">Cell shape</keyword>
<keyword id="KW-0961">Cell wall biogenesis/degradation</keyword>
<keyword id="KW-0413">Isomerase</keyword>
<keyword id="KW-0573">Peptidoglycan synthesis</keyword>
<dbReference type="EC" id="5.1.1.3" evidence="1"/>
<dbReference type="EMBL" id="AE014291">
    <property type="protein sequence ID" value="AAN30114.1"/>
    <property type="molecule type" value="Genomic_DNA"/>
</dbReference>
<dbReference type="EMBL" id="CP002997">
    <property type="protein sequence ID" value="AEM18532.1"/>
    <property type="molecule type" value="Genomic_DNA"/>
</dbReference>
<dbReference type="RefSeq" id="WP_002964323.1">
    <property type="nucleotide sequence ID" value="NZ_KN046804.1"/>
</dbReference>
<dbReference type="SMR" id="P63632"/>
<dbReference type="GeneID" id="97533561"/>
<dbReference type="KEGG" id="bms:BR1195"/>
<dbReference type="KEGG" id="bsi:BS1330_I1191"/>
<dbReference type="PATRIC" id="fig|204722.21.peg.2284"/>
<dbReference type="HOGENOM" id="CLU_052344_2_0_5"/>
<dbReference type="PhylomeDB" id="P63632"/>
<dbReference type="UniPathway" id="UPA00219"/>
<dbReference type="Proteomes" id="UP000007104">
    <property type="component" value="Chromosome I"/>
</dbReference>
<dbReference type="GO" id="GO:0008881">
    <property type="term" value="F:glutamate racemase activity"/>
    <property type="evidence" value="ECO:0007669"/>
    <property type="project" value="UniProtKB-UniRule"/>
</dbReference>
<dbReference type="GO" id="GO:0071555">
    <property type="term" value="P:cell wall organization"/>
    <property type="evidence" value="ECO:0007669"/>
    <property type="project" value="UniProtKB-KW"/>
</dbReference>
<dbReference type="GO" id="GO:0009252">
    <property type="term" value="P:peptidoglycan biosynthetic process"/>
    <property type="evidence" value="ECO:0007669"/>
    <property type="project" value="UniProtKB-UniRule"/>
</dbReference>
<dbReference type="GO" id="GO:0008360">
    <property type="term" value="P:regulation of cell shape"/>
    <property type="evidence" value="ECO:0007669"/>
    <property type="project" value="UniProtKB-KW"/>
</dbReference>
<dbReference type="Gene3D" id="3.40.50.1860">
    <property type="match status" value="2"/>
</dbReference>
<dbReference type="HAMAP" id="MF_00258">
    <property type="entry name" value="Glu_racemase"/>
    <property type="match status" value="1"/>
</dbReference>
<dbReference type="InterPro" id="IPR015942">
    <property type="entry name" value="Asp/Glu/hydantoin_racemase"/>
</dbReference>
<dbReference type="InterPro" id="IPR001920">
    <property type="entry name" value="Asp/Glu_race"/>
</dbReference>
<dbReference type="InterPro" id="IPR018187">
    <property type="entry name" value="Asp/Glu_racemase_AS_1"/>
</dbReference>
<dbReference type="InterPro" id="IPR033134">
    <property type="entry name" value="Asp/Glu_racemase_AS_2"/>
</dbReference>
<dbReference type="InterPro" id="IPR004391">
    <property type="entry name" value="Glu_race"/>
</dbReference>
<dbReference type="NCBIfam" id="TIGR00067">
    <property type="entry name" value="glut_race"/>
    <property type="match status" value="1"/>
</dbReference>
<dbReference type="PANTHER" id="PTHR21198">
    <property type="entry name" value="GLUTAMATE RACEMASE"/>
    <property type="match status" value="1"/>
</dbReference>
<dbReference type="PANTHER" id="PTHR21198:SF2">
    <property type="entry name" value="GLUTAMATE RACEMASE"/>
    <property type="match status" value="1"/>
</dbReference>
<dbReference type="Pfam" id="PF01177">
    <property type="entry name" value="Asp_Glu_race"/>
    <property type="match status" value="1"/>
</dbReference>
<dbReference type="SUPFAM" id="SSF53681">
    <property type="entry name" value="Aspartate/glutamate racemase"/>
    <property type="match status" value="2"/>
</dbReference>
<dbReference type="PROSITE" id="PS00923">
    <property type="entry name" value="ASP_GLU_RACEMASE_1"/>
    <property type="match status" value="1"/>
</dbReference>
<dbReference type="PROSITE" id="PS00924">
    <property type="entry name" value="ASP_GLU_RACEMASE_2"/>
    <property type="match status" value="1"/>
</dbReference>
<proteinExistence type="inferred from homology"/>
<comment type="function">
    <text evidence="1">Provides the (R)-glutamate required for cell wall biosynthesis.</text>
</comment>
<comment type="catalytic activity">
    <reaction evidence="1">
        <text>L-glutamate = D-glutamate</text>
        <dbReference type="Rhea" id="RHEA:12813"/>
        <dbReference type="ChEBI" id="CHEBI:29985"/>
        <dbReference type="ChEBI" id="CHEBI:29986"/>
        <dbReference type="EC" id="5.1.1.3"/>
    </reaction>
</comment>
<comment type="pathway">
    <text evidence="1">Cell wall biogenesis; peptidoglycan biosynthesis.</text>
</comment>
<comment type="similarity">
    <text evidence="1">Belongs to the aspartate/glutamate racemases family.</text>
</comment>
<protein>
    <recommendedName>
        <fullName evidence="1">Glutamate racemase</fullName>
        <ecNumber evidence="1">5.1.1.3</ecNumber>
    </recommendedName>
</protein>
<organism>
    <name type="scientific">Brucella suis biovar 1 (strain 1330)</name>
    <dbReference type="NCBI Taxonomy" id="204722"/>
    <lineage>
        <taxon>Bacteria</taxon>
        <taxon>Pseudomonadati</taxon>
        <taxon>Pseudomonadota</taxon>
        <taxon>Alphaproteobacteria</taxon>
        <taxon>Hyphomicrobiales</taxon>
        <taxon>Brucellaceae</taxon>
        <taxon>Brucella/Ochrobactrum group</taxon>
        <taxon>Brucella</taxon>
    </lineage>
</organism>
<name>MURI_BRUSU</name>
<evidence type="ECO:0000255" key="1">
    <source>
        <dbReference type="HAMAP-Rule" id="MF_00258"/>
    </source>
</evidence>
<accession>P63632</accession>
<accession>G0KAB6</accession>
<accession>Q8YHK2</accession>
<sequence>MKKAPAGSFPAKPTIAPERPILVFDSGIGGLTVLREARVVMPDRRFVYIADDAGFPYGNWEEEALKRRIIELFGEFIANYDPEIAVIACNTASTLVLEDLRRAYPSVPFVGTVPAIKPAAERTSSGLVSVLATPGTVKRAYTRDLIQSFASRCHVRLVGADGLAAIAEAHIRGESFDEALVMAQIAPCFIEKDGKRTDIVVLACTHYPFLVNVLRRLAPWPVDWLDPAEAIARRMKSLLPARSDDDEFHSQDDLAFFTSRKPDYAIRRLMQGFGLRF</sequence>